<sequence length="496" mass="55000">MERRNPSERGVPAGFSGHASVESGCETQESPATVVFRPPGDNTDGGAAAAAGGSQAAAAGAEPMEPESRPGPSGMNVVQVAELYPELRRILTITEDGQGLKGVKRERGACEATEEARNLAFSLMTRHRPECITFQQIKDNCANELDLLAQKYSIEQLTTYWLQPGDDFEEAIRVYAKVALRPDCKYKISKLVNIRNCCYISGNGAEVEIDTEDRVAFRCSMINMWPGVLGMDGVVIMNVRFTGPNFSGTVFLANTNLILHGVSFYGFNNTCVEAWTDVRVRGCAFYCCWKGVVCRPKSRASIKKCLFERCTLGILSEGNSRVRHNVASDCGCFMLVKSVAVIKHNMVCGNCEDRASQMLTCSDGNCHLLKTIHVASHSRKAWPVFEHNILTRCSLHLGNRRGVFLPYQCNLSHTKILLEPESMSKVNLNGVFDMTMKIWKVLRYDETRTRCRPCECGGKHIRNQPVMLDVTEELRPDHLVLACTRAEFGSSDEDTD</sequence>
<comment type="function">
    <text evidence="4 5 6 7 9 10">Plays a major role to prevent cellular inhibition of viral genome replication (PubMed:12186903, PubMed:14657032, PubMed:18614635, PubMed:20484509, PubMed:20861261, PubMed:25772236). Assembles an SCF-like E3 ubiquitin ligase complex based on the cellular proteins ELOB, ELOC, CUL5 and RBX1, in cooperation with viral E4orf6 (PubMed:12186903, PubMed:14657032, PubMed:18614635). This viral RING-type ligase ubiquitinates cellular substrates and targets them to proteasomal degradation: TP53/p53, LIG4, MRE11-RAD50-NBS1 (MRN) complex, ITGA3, DAXX and BLM (PubMed:12186903, PubMed:18614635, PubMed:20484509). E1B-55K probably acts as the substrate-specific adapter of the SCF-like E3 ubiquitin ligase complex (PubMed:18614635). Degradation of host TP53/p53 activity is essential for preventing E1A-induced TP53 accumulation that would otherwise lead to cell apoptosis and growth arrest (PubMed:25772236). E1B-55K also inactivates TP53 transcription-factor activity by binding its transactivation domain (PubMed:25772236). E1B-55K also functions as a SUMO1 E3 ligase for TP53 which causes the latter to be sequestered in promyelocytic leukemia (PML) nuclear bodies thereby contributing to maximal inhibition of TP53 function (PubMed:20861261).</text>
</comment>
<comment type="subunit">
    <text evidence="1 3 8 10">Interacts with host PML-4 and PML-5; this interaction promotes efficient subnuclear targeting of E1B-55K to PML nuclear bodies (PubMed:20639899, PubMed:25772236). Interacts with E4-ORF3 protein (PubMed:10211970). Interacts with E4-ORF6 protein (By similarity).</text>
</comment>
<comment type="interaction">
    <interactant intactId="EBI-1561361">
        <id>P03243</id>
    </interactant>
    <interactant intactId="EBI-77321">
        <id>Q9UER7</id>
        <label>DAXX</label>
    </interactant>
    <organismsDiffer>true</organismsDiffer>
    <experiments>4</experiments>
</comment>
<comment type="interaction">
    <interactant intactId="EBI-1927377">
        <id>P03243-1</id>
    </interactant>
    <interactant intactId="EBI-396513">
        <id>P49959</id>
        <label>MRE11</label>
    </interactant>
    <organismsDiffer>true</organismsDiffer>
    <experiments>2</experiments>
</comment>
<comment type="interaction">
    <interactant intactId="EBI-1927377">
        <id>P03243-1</id>
    </interactant>
    <interactant intactId="EBI-2941391">
        <id>F1M589</id>
        <label>Pml</label>
    </interactant>
    <organismsDiffer>true</organismsDiffer>
    <experiments>6</experiments>
</comment>
<comment type="interaction">
    <interactant intactId="EBI-1927377">
        <id>P03243-1</id>
    </interactant>
    <interactant intactId="EBI-295890">
        <id>P29590</id>
        <label>PML</label>
    </interactant>
    <organismsDiffer>true</organismsDiffer>
    <experiments>3</experiments>
</comment>
<comment type="interaction">
    <interactant intactId="EBI-1927377">
        <id>P03243-1</id>
    </interactant>
    <interactant intactId="EBI-303996">
        <id>P29590-2</id>
        <label>PML</label>
    </interactant>
    <organismsDiffer>true</organismsDiffer>
    <experiments>3</experiments>
</comment>
<comment type="interaction">
    <interactant intactId="EBI-1927377">
        <id>P03243-1</id>
    </interactant>
    <interactant intactId="EBI-304008">
        <id>P29590-5</id>
        <label>PML</label>
    </interactant>
    <organismsDiffer>true</organismsDiffer>
    <experiments>3</experiments>
</comment>
<comment type="subcellular location">
    <subcellularLocation>
        <location evidence="3 9">Host nucleus</location>
    </subcellularLocation>
    <subcellularLocation>
        <location evidence="3 6">Host cytoplasm</location>
    </subcellularLocation>
    <text evidence="9">Colocalizes with host TP53 to host PML nuclear bodies. PML localization of E1B-55K is necessary for E1B-55K-dependent SUMOylation of TP53.</text>
</comment>
<comment type="alternative products">
    <event type="alternative splicing"/>
    <isoform>
        <id>P03243-1</id>
        <name>E1B-496R</name>
        <name>E1B-55K</name>
        <sequence type="displayed"/>
    </isoform>
    <isoform>
        <id>P03243-2</id>
        <name>E1B-156R</name>
        <name>E1B-18K</name>
        <sequence type="described" ref="VSP_033960"/>
    </isoform>
    <isoform>
        <id>P03243-3</id>
        <name>E1B-93R</name>
        <name>E1B-16K</name>
        <sequence type="described" ref="VSP_033961 VSP_033964"/>
    </isoform>
    <isoform>
        <id>P03243-4</id>
        <name>E1B-84R</name>
        <name>E1B-15K</name>
        <sequence type="described" ref="VSP_033962 VSP_033963"/>
    </isoform>
    <isoform>
        <id>P03246-1</id>
        <name>E1B-176R</name>
        <name>E1B-19K</name>
        <sequence type="external"/>
    </isoform>
    <text>At least five different polypeptides are generated by alternative splicing of a common mRNA precursor.</text>
</comment>
<comment type="domain">
    <text evidence="10">Contains a PML interaction motif that allows the subnuclear PML localization.</text>
</comment>
<comment type="PTM">
    <text evidence="6">Phosphorylation at the C-terminus affects the subcellular location.</text>
</comment>
<comment type="similarity">
    <text evidence="12">Belongs to the adenoviridae E1B 55 kDa protein family.</text>
</comment>
<keyword id="KW-0025">Alternative splicing</keyword>
<keyword id="KW-0244">Early protein</keyword>
<keyword id="KW-1035">Host cytoplasm</keyword>
<keyword id="KW-1048">Host nucleus</keyword>
<keyword id="KW-0945">Host-virus interaction</keyword>
<keyword id="KW-1119">Modulation of host cell apoptosis by virus</keyword>
<keyword id="KW-0597">Phosphoprotein</keyword>
<keyword id="KW-1185">Reference proteome</keyword>
<evidence type="ECO:0000250" key="1">
    <source>
        <dbReference type="UniProtKB" id="P03244"/>
    </source>
</evidence>
<evidence type="ECO:0000256" key="2">
    <source>
        <dbReference type="SAM" id="MobiDB-lite"/>
    </source>
</evidence>
<evidence type="ECO:0000269" key="3">
    <source>
    </source>
</evidence>
<evidence type="ECO:0000269" key="4">
    <source>
    </source>
</evidence>
<evidence type="ECO:0000269" key="5">
    <source>
    </source>
</evidence>
<evidence type="ECO:0000269" key="6">
    <source>
    </source>
</evidence>
<evidence type="ECO:0000269" key="7">
    <source>
    </source>
</evidence>
<evidence type="ECO:0000269" key="8">
    <source>
    </source>
</evidence>
<evidence type="ECO:0000269" key="9">
    <source>
    </source>
</evidence>
<evidence type="ECO:0000269" key="10">
    <source>
    </source>
</evidence>
<evidence type="ECO:0000303" key="11">
    <source>
    </source>
</evidence>
<evidence type="ECO:0000305" key="12"/>
<organismHost>
    <name type="scientific">Homo sapiens</name>
    <name type="common">Human</name>
    <dbReference type="NCBI Taxonomy" id="9606"/>
</organismHost>
<organism>
    <name type="scientific">Human adenovirus C serotype 5</name>
    <name type="common">HAdV-5</name>
    <name type="synonym">Human adenovirus 5</name>
    <dbReference type="NCBI Taxonomy" id="28285"/>
    <lineage>
        <taxon>Viruses</taxon>
        <taxon>Varidnaviria</taxon>
        <taxon>Bamfordvirae</taxon>
        <taxon>Preplasmiviricota</taxon>
        <taxon>Tectiliviricetes</taxon>
        <taxon>Rowavirales</taxon>
        <taxon>Adenoviridae</taxon>
        <taxon>Mastadenovirus</taxon>
        <taxon>Human mastadenovirus C</taxon>
    </lineage>
</organism>
<name>E1B55_ADE05</name>
<proteinExistence type="evidence at protein level"/>
<dbReference type="EMBL" id="M73260">
    <property type="status" value="NOT_ANNOTATED_CDS"/>
    <property type="molecule type" value="Genomic_DNA"/>
</dbReference>
<dbReference type="EMBL" id="X02996">
    <property type="protein sequence ID" value="CAA26743.1"/>
    <property type="molecule type" value="Genomic_DNA"/>
</dbReference>
<dbReference type="EMBL" id="X02996">
    <property type="protein sequence ID" value="CAB40666.1"/>
    <property type="molecule type" value="Genomic_DNA"/>
</dbReference>
<dbReference type="PIR" id="A03809">
    <property type="entry name" value="Q1AD55"/>
</dbReference>
<dbReference type="RefSeq" id="AP_000199.1">
    <molecule id="P03243-1"/>
    <property type="nucleotide sequence ID" value="AC_000008.1"/>
</dbReference>
<dbReference type="SMR" id="P03243"/>
<dbReference type="DIP" id="DIP-569N"/>
<dbReference type="IntAct" id="P03243">
    <property type="interactions" value="11"/>
</dbReference>
<dbReference type="Proteomes" id="UP000004992">
    <property type="component" value="Genome"/>
</dbReference>
<dbReference type="GO" id="GO:0030430">
    <property type="term" value="C:host cell cytoplasm"/>
    <property type="evidence" value="ECO:0000314"/>
    <property type="project" value="UniProtKB"/>
</dbReference>
<dbReference type="GO" id="GO:0042025">
    <property type="term" value="C:host cell nucleus"/>
    <property type="evidence" value="ECO:0007669"/>
    <property type="project" value="UniProtKB-SubCell"/>
</dbReference>
<dbReference type="GO" id="GO:0061665">
    <property type="term" value="F:SUMO ligase activity"/>
    <property type="evidence" value="ECO:0000314"/>
    <property type="project" value="UniProtKB"/>
</dbReference>
<dbReference type="GO" id="GO:1990756">
    <property type="term" value="F:ubiquitin-like ligase-substrate adaptor activity"/>
    <property type="evidence" value="ECO:0000314"/>
    <property type="project" value="UniProtKB"/>
</dbReference>
<dbReference type="GO" id="GO:0052150">
    <property type="term" value="P:symbiont-mediated perturbation of host apoptosis"/>
    <property type="evidence" value="ECO:0007669"/>
    <property type="project" value="UniProtKB-KW"/>
</dbReference>
<dbReference type="GO" id="GO:0039648">
    <property type="term" value="P:symbiont-mediated perturbation of host ubiquitin-like protein modification"/>
    <property type="evidence" value="ECO:0000314"/>
    <property type="project" value="UniProtKB"/>
</dbReference>
<dbReference type="Gene3D" id="2.160.20.10">
    <property type="entry name" value="Single-stranded right-handed beta-helix, Pectin lyase-like"/>
    <property type="match status" value="1"/>
</dbReference>
<dbReference type="InterPro" id="IPR006717">
    <property type="entry name" value="Adeno_E1B_55K_N"/>
</dbReference>
<dbReference type="InterPro" id="IPR002612">
    <property type="entry name" value="Adeno_E1B_55kDa"/>
</dbReference>
<dbReference type="InterPro" id="IPR012334">
    <property type="entry name" value="Pectin_lyas_fold"/>
</dbReference>
<dbReference type="InterPro" id="IPR011050">
    <property type="entry name" value="Pectin_lyase_fold/virulence"/>
</dbReference>
<dbReference type="Pfam" id="PF01696">
    <property type="entry name" value="Adeno_E1B_55K"/>
    <property type="match status" value="1"/>
</dbReference>
<dbReference type="Pfam" id="PF04623">
    <property type="entry name" value="Adeno_E1B_55K_N"/>
    <property type="match status" value="1"/>
</dbReference>
<dbReference type="SUPFAM" id="SSF51126">
    <property type="entry name" value="Pectin lyase-like"/>
    <property type="match status" value="1"/>
</dbReference>
<feature type="chain" id="PRO_0000221725" description="E1B 55 kDa protein">
    <location>
        <begin position="1"/>
        <end position="496"/>
    </location>
</feature>
<feature type="region of interest" description="Disordered" evidence="2">
    <location>
        <begin position="1"/>
        <end position="74"/>
    </location>
</feature>
<feature type="compositionally biased region" description="Low complexity" evidence="2">
    <location>
        <begin position="45"/>
        <end position="61"/>
    </location>
</feature>
<feature type="modified residue" description="Phosphoserine" evidence="6">
    <location>
        <position position="490"/>
    </location>
</feature>
<feature type="modified residue" description="Phosphoserine" evidence="6">
    <location>
        <position position="491"/>
    </location>
</feature>
<feature type="modified residue" description="Phosphothreonine" evidence="6">
    <location>
        <position position="495"/>
    </location>
</feature>
<feature type="splice variant" id="VSP_033960" description="In isoform E1B-156R." evidence="12">
    <location>
        <begin position="80"/>
        <end position="419"/>
    </location>
</feature>
<feature type="splice variant" id="VSP_033961" description="In isoform E1B-93R." evidence="12">
    <original>VAELYPELRRILTI</original>
    <variation>EGGVPTLPMQFESH</variation>
    <location>
        <begin position="80"/>
        <end position="93"/>
    </location>
</feature>
<feature type="splice variant" id="VSP_033962" description="In isoform E1B-84R." evidence="12">
    <original>VAELY</original>
    <variation>QPPPP</variation>
    <location>
        <begin position="80"/>
        <end position="84"/>
    </location>
</feature>
<feature type="splice variant" id="VSP_033963" description="In isoform E1B-84R." evidence="12">
    <location>
        <begin position="85"/>
        <end position="496"/>
    </location>
</feature>
<feature type="splice variant" id="VSP_033964" description="In isoform E1B-93R." evidence="12">
    <location>
        <begin position="94"/>
        <end position="495"/>
    </location>
</feature>
<feature type="mutagenesis site" description="Does not affect ability to promote ubiquitination and degradation of host MRE11, whilie ability to degrade host TP53 is impaired." evidence="6">
    <original>R</original>
    <variation>A</variation>
    <location>
        <position position="240"/>
    </location>
</feature>
<feature type="mutagenesis site" description="Does not affect ability to promote ubiquitination and degradation of host TP53, whilie ability to degrade host MRE11 is impaired." evidence="6">
    <original>H</original>
    <variation>A</variation>
    <location>
        <position position="373"/>
    </location>
</feature>
<feature type="mutagenesis site" description="Decreased ability to promote ubiquitination and degradation of host MRE11, without affecting ability to promote ubiquitination and degradation of host TP53." evidence="6">
    <original>Y</original>
    <variation>A</variation>
    <location>
        <position position="444"/>
    </location>
</feature>
<feature type="mutagenesis site" description="Aboloished ability to promote ubiquitination and degradation of host proteins." evidence="6">
    <original>CEC</original>
    <variation>SES</variation>
    <location>
        <begin position="454"/>
        <end position="456"/>
    </location>
</feature>
<feature type="mutagenesis site" description="In 3XPA mutant; decreased phosphorylation, affecting subcellular localization." evidence="6">
    <original>SSDEDT</original>
    <variation>AADEDA</variation>
    <location>
        <begin position="490"/>
        <end position="495"/>
    </location>
</feature>
<accession>P03243</accession>
<accession>Q64827</accession>
<reference key="1">
    <citation type="journal article" date="1981" name="Cell">
        <title>The 2.2 kb E1b mRNA of human Ad12 and Ad5 codes for two tumor antigens starting at different AUG triplets.</title>
        <authorList>
            <person name="Bos J.L."/>
            <person name="Polder L.J."/>
            <person name="Bernards R."/>
            <person name="Schrier P.I."/>
            <person name="van den Elsen P.J."/>
            <person name="van der Eb A.J."/>
            <person name="van Ormondt H."/>
        </authorList>
    </citation>
    <scope>NUCLEOTIDE SEQUENCE [GENOMIC DNA]</scope>
</reference>
<reference key="2">
    <citation type="journal article" date="1980" name="Gene">
        <title>The nucleotide sequence of the transforming early region E1 of adenovirus type 5 DNA.</title>
        <authorList>
            <person name="van Ormondt H."/>
            <person name="Maat J."/>
            <person name="van Beveren C.P."/>
        </authorList>
    </citation>
    <scope>NUCLEOTIDE SEQUENCE [GENOMIC DNA]</scope>
</reference>
<reference key="3">
    <citation type="journal article" date="1992" name="Virology">
        <title>The sequence of the genome of adenovirus type 5 and its comparison with the genome of adenovirus type 2.</title>
        <authorList>
            <person name="Chroboczek J."/>
            <person name="Bieber F."/>
            <person name="Jacrot B."/>
        </authorList>
    </citation>
    <scope>NUCLEOTIDE SEQUENCE [LARGE SCALE GENOMIC DNA]</scope>
</reference>
<reference key="4">
    <citation type="journal article" date="1979" name="Nature">
        <title>Structure of two spliced mRNAs from the transforming region of human subgroup C adenoviruses.</title>
        <authorList>
            <person name="Perricaudet M."/>
            <person name="Akusjaervi G."/>
            <person name="Virtanen A."/>
            <person name="Pettersson U."/>
        </authorList>
    </citation>
    <scope>ALTERNATIVE SPLICING (ISOFORMS E1B-496R; E1B-176R; E1B-156R; E1B-93R AND E1B-84R)</scope>
</reference>
<reference key="5">
    <citation type="journal article" date="1994" name="J. Gen. Virol.">
        <title>Characterization of the 55K adenovirus type 5 E1B product and related proteins.</title>
        <authorList>
            <person name="Takayesu D."/>
            <person name="Teodoro J.G."/>
            <person name="Whalen S.G."/>
            <person name="Branton P.E."/>
        </authorList>
    </citation>
    <scope>ALTERNATIVE SPLICING (ISOFORMS E1B-496R; E1B-176R; E1B-156R; E1B-93R AND E1B-84R)</scope>
</reference>
<reference key="6">
    <citation type="journal article" date="1999" name="J. Gen. Virol.">
        <title>The adenovirus type 5 E1b 55K and E4 Orf3 proteins associate in infected cells and affect ND10 components.</title>
        <authorList>
            <person name="Leppard K.N."/>
            <person name="Everett R.D."/>
        </authorList>
    </citation>
    <scope>SUBCELLULAR LOCATION</scope>
    <scope>INTERACTION WITH E4-ORF3 PROTEIN</scope>
</reference>
<reference key="7">
    <citation type="journal article" date="2003" name="J. Virol.">
        <title>Adenovirus E1B 55-kilodalton oncoprotein binds to Daxx and eliminates enhancement of p53-dependent transcription by DAXX.</title>
        <authorList>
            <person name="Zhao L.Y."/>
            <person name="Colosimo A.L."/>
            <person name="Liu Y."/>
            <person name="Wan Y."/>
            <person name="Liao D."/>
        </authorList>
    </citation>
    <scope>INTERACTION WITH HOST DAXX</scope>
</reference>
<reference key="8">
    <citation type="journal article" date="2002" name="J. Virol.">
        <title>Analysis of the adenovirus E1B-55K-anchored proteome reveals its link to ubiquitination machinery.</title>
        <authorList>
            <person name="Harada J.N."/>
            <person name="Shevchenko A."/>
            <person name="Shevchenko A."/>
            <person name="Pallas D.C."/>
            <person name="Berk A.J."/>
        </authorList>
    </citation>
    <scope>FUNCTION</scope>
</reference>
<reference key="9">
    <citation type="journal article" date="2003" name="EMBO J.">
        <title>The Mre11 complex is required for ATM activation and the G2/M checkpoint.</title>
        <authorList>
            <person name="Carson C.T."/>
            <person name="Schwartz R.A."/>
            <person name="Stracker T.H."/>
            <person name="Lilley C.E."/>
            <person name="Lee D.V."/>
            <person name="Weitzman M.D."/>
        </authorList>
    </citation>
    <scope>FUNCTION</scope>
</reference>
<reference key="10">
    <citation type="journal article" date="2008" name="J. Virol.">
        <title>Distinct requirements of adenovirus E1b55K protein for degradation of cellular substrates.</title>
        <authorList>
            <person name="Schwartz R.A."/>
            <person name="Lakdawala S.S."/>
            <person name="Eshleman H.D."/>
            <person name="Russell M.R."/>
            <person name="Carson C.T."/>
            <person name="Weitzman M.D."/>
        </authorList>
    </citation>
    <scope>FUNCTION</scope>
    <scope>SUBCELLULAR LOCATION</scope>
    <scope>PHOSPHORYLATION AT SER-490; SER-491 AND THR-495</scope>
    <scope>MUTAGENESIS OF ARG-240; HIS-373; TYR-444; 454-CYS--CYS-456 AND 490-SER--THR-495</scope>
</reference>
<reference key="11">
    <citation type="journal article" date="2010" name="Oncogene">
        <title>SUMO modification of E1B-55K oncoprotein regulates isoform-specific binding to the tumour suppressor protein PML.</title>
        <authorList>
            <person name="Wimmer P."/>
            <person name="Schreiner S."/>
            <person name="Everett R.D."/>
            <person name="Sirma H."/>
            <person name="Groitl P."/>
            <person name="Dobner T."/>
        </authorList>
    </citation>
    <scope>INTERACTION WITH HOST PML-4</scope>
    <scope>INTERACTION WITH HOST PML-5</scope>
</reference>
<reference key="12">
    <citation type="journal article" date="2010" name="J. Virol.">
        <title>Adenovirus E1B 55-kilodalton protein is a p53-SUMO1 E3 ligase that represses p53 and stimulates its nuclear export through interactions with promyelocytic leukemia nuclear bodies.</title>
        <authorList>
            <person name="Pennella M.A."/>
            <person name="Liu Y."/>
            <person name="Woo J.L."/>
            <person name="Kim C.A."/>
            <person name="Berk A.J."/>
        </authorList>
    </citation>
    <scope>FUNCTION</scope>
    <scope>SUBCELLULAR LOCATION</scope>
</reference>
<reference key="13">
    <citation type="journal article" date="2010" name="J. Virol.">
        <title>Proteasome-dependent degradation of Daxx by the viral E1B-55K protein in human adenovirus-infected cells.</title>
        <authorList>
            <person name="Schreiner S."/>
            <person name="Wimmer P."/>
            <person name="Sirma H."/>
            <person name="Everett R.D."/>
            <person name="Blanchette P."/>
            <person name="Groitl P."/>
            <person name="Dobner T."/>
        </authorList>
    </citation>
    <scope>FUNCTION</scope>
</reference>
<reference key="14">
    <citation type="journal article" date="2016" name="Oncogene">
        <title>PML isoforms IV and V contribute to adenovirus-mediated oncogenic transformation by functionally inhibiting the tumor-suppressor p53.</title>
        <authorList>
            <person name="Wimmer P."/>
            <person name="Berscheminski J."/>
            <person name="Blanchette P."/>
            <person name="Groitl P."/>
            <person name="Branton P.E."/>
            <person name="Hay R.T."/>
            <person name="Dobner T."/>
            <person name="Schreiner S."/>
        </authorList>
    </citation>
    <scope>FUNCTION</scope>
    <scope>INTERACTION WITH HOST TP53</scope>
    <scope>INTERACTION WITH HOST PML-4</scope>
    <scope>INTERACTION WITH HOST PML-5</scope>
</reference>
<protein>
    <recommendedName>
        <fullName>E1B 55 kDa protein</fullName>
        <shortName>E1B-55K</shortName>
        <shortName evidence="11">E1b55K</shortName>
    </recommendedName>
    <alternativeName>
        <fullName>E1B protein, large T-antigen</fullName>
    </alternativeName>
    <alternativeName>
        <fullName>E1B-495R</fullName>
    </alternativeName>
</protein>